<proteinExistence type="inferred from homology"/>
<comment type="function">
    <text evidence="1">The glycine cleavage system catalyzes the degradation of glycine. The P protein binds the alpha-amino group of glycine through its pyridoxal phosphate cofactor; CO(2) is released and the remaining methylamine moiety is then transferred to the lipoamide cofactor of the H protein.</text>
</comment>
<comment type="catalytic activity">
    <reaction evidence="1">
        <text>N(6)-[(R)-lipoyl]-L-lysyl-[glycine-cleavage complex H protein] + glycine + H(+) = N(6)-[(R)-S(8)-aminomethyldihydrolipoyl]-L-lysyl-[glycine-cleavage complex H protein] + CO2</text>
        <dbReference type="Rhea" id="RHEA:24304"/>
        <dbReference type="Rhea" id="RHEA-COMP:10494"/>
        <dbReference type="Rhea" id="RHEA-COMP:10495"/>
        <dbReference type="ChEBI" id="CHEBI:15378"/>
        <dbReference type="ChEBI" id="CHEBI:16526"/>
        <dbReference type="ChEBI" id="CHEBI:57305"/>
        <dbReference type="ChEBI" id="CHEBI:83099"/>
        <dbReference type="ChEBI" id="CHEBI:83143"/>
        <dbReference type="EC" id="1.4.4.2"/>
    </reaction>
</comment>
<comment type="cofactor">
    <cofactor evidence="1">
        <name>pyridoxal 5'-phosphate</name>
        <dbReference type="ChEBI" id="CHEBI:597326"/>
    </cofactor>
</comment>
<comment type="subunit">
    <text evidence="1">The glycine cleavage system is composed of four proteins: P, T, L and H.</text>
</comment>
<comment type="similarity">
    <text evidence="1">Belongs to the GcvP family.</text>
</comment>
<keyword id="KW-0560">Oxidoreductase</keyword>
<keyword id="KW-0663">Pyridoxal phosphate</keyword>
<feature type="chain" id="PRO_0000166946" description="Glycine dehydrogenase (decarboxylating)">
    <location>
        <begin position="1"/>
        <end position="954"/>
    </location>
</feature>
<feature type="modified residue" description="N6-(pyridoxal phosphate)lysine" evidence="1">
    <location>
        <position position="704"/>
    </location>
</feature>
<name>GCSP_VIBVU</name>
<reference key="1">
    <citation type="submission" date="2002-12" db="EMBL/GenBank/DDBJ databases">
        <title>Complete genome sequence of Vibrio vulnificus CMCP6.</title>
        <authorList>
            <person name="Rhee J.H."/>
            <person name="Kim S.Y."/>
            <person name="Chung S.S."/>
            <person name="Kim J.J."/>
            <person name="Moon Y.H."/>
            <person name="Jeong H."/>
            <person name="Choy H.E."/>
        </authorList>
    </citation>
    <scope>NUCLEOTIDE SEQUENCE [LARGE SCALE GENOMIC DNA]</scope>
    <source>
        <strain>CMCP6</strain>
    </source>
</reference>
<gene>
    <name evidence="1" type="primary">gcvP</name>
    <name type="ordered locus">VV2_0186</name>
</gene>
<sequence>MTELLQSLNTQHEFVGRHNGPNHADQQKMLSTINAESLDALIAQTVPAQIRLEKPMQLAEAQSEADMLASIKKFADLNQVKRTFIGQGYYNTFTPNVILRNVLENPGWYTAYTPYQPEISQGRLESLLNYQQMVMDLTGMDIANASLLDEATAAAEAMTLCQRAGKSKSKVFFVADDVHPQTIEVIKTRAKYFGFDVVIGNVDSLPQTEAFGALLQYPSTTGEVRDLTDVITQAQANKTLVSVATDLLASALVKPAGEMGADVVIGSAQRFGVPMGYGGPHAAFMATREQHKRTMPGRVIGVSIDAKGNQALRMAMQTREQHIRREKATSNICTAQALLANMASFFAVYHGEVGIRTIARRTHHMTAILAAGLTKSGYELAHNAFFDTITINTGDNTQALYAKAQAADINLRLLDGQIGISFDETTTVADIDALFAIFDVKESVNALSTDIAGNEFAAIPEACRRTSRFLTHPVFNTHHSETQMMRYLKQLENKDFSLTHGMIPLGSCTMKLNAAAEMIPVTWPEFGALHPFAPIEQAAGYTALAEDLKAKLCEITGYDAFSLQPNSGASGEYAGLIAIQRYHESRGEGHRNVCLIPSSAHGTNPATAAMVSMKVVVVKCDENGNIDLVDLAAKIEKHQENLSSIMITYPSTHGVYEEQVKEVCEMVHAAGGQVYLDGANMNAQVGLTSPGFIGSDVSHLNLHKTFCIPHGGGGPGMGPIGVKSHLAPFLPGHIENGVEGKEFAVSAADLGSASILPISWAYIAMMGADGLTEATKVAILNANYVMERLRPHYPVLYRGTNGRVAHECIIDIRPLKEETGISEEDIAKRLMDYGFHAPTMSFPVAGTLMVEPTESEDLEELDRFCDAMIAIREEMTKVKNGEWPLENNPLVNAPHTQVDLMEEQWDRPYPREIACFPSAATKRSKYWPTVNRVDNVYGDRNLVCSCPGIENYEE</sequence>
<evidence type="ECO:0000255" key="1">
    <source>
        <dbReference type="HAMAP-Rule" id="MF_00711"/>
    </source>
</evidence>
<organism>
    <name type="scientific">Vibrio vulnificus (strain CMCP6)</name>
    <dbReference type="NCBI Taxonomy" id="216895"/>
    <lineage>
        <taxon>Bacteria</taxon>
        <taxon>Pseudomonadati</taxon>
        <taxon>Pseudomonadota</taxon>
        <taxon>Gammaproteobacteria</taxon>
        <taxon>Vibrionales</taxon>
        <taxon>Vibrionaceae</taxon>
        <taxon>Vibrio</taxon>
    </lineage>
</organism>
<accession>Q8D7G7</accession>
<dbReference type="EC" id="1.4.4.2" evidence="1"/>
<dbReference type="EMBL" id="AE016796">
    <property type="protein sequence ID" value="AAO07159.1"/>
    <property type="molecule type" value="Genomic_DNA"/>
</dbReference>
<dbReference type="RefSeq" id="WP_011081166.1">
    <property type="nucleotide sequence ID" value="NC_004460.2"/>
</dbReference>
<dbReference type="SMR" id="Q8D7G7"/>
<dbReference type="KEGG" id="vvu:VV2_0186"/>
<dbReference type="HOGENOM" id="CLU_004620_1_1_6"/>
<dbReference type="Proteomes" id="UP000002275">
    <property type="component" value="Chromosome 2"/>
</dbReference>
<dbReference type="GO" id="GO:0005829">
    <property type="term" value="C:cytosol"/>
    <property type="evidence" value="ECO:0007669"/>
    <property type="project" value="TreeGrafter"/>
</dbReference>
<dbReference type="GO" id="GO:0005960">
    <property type="term" value="C:glycine cleavage complex"/>
    <property type="evidence" value="ECO:0007669"/>
    <property type="project" value="TreeGrafter"/>
</dbReference>
<dbReference type="GO" id="GO:0016594">
    <property type="term" value="F:glycine binding"/>
    <property type="evidence" value="ECO:0007669"/>
    <property type="project" value="TreeGrafter"/>
</dbReference>
<dbReference type="GO" id="GO:0004375">
    <property type="term" value="F:glycine dehydrogenase (decarboxylating) activity"/>
    <property type="evidence" value="ECO:0007669"/>
    <property type="project" value="UniProtKB-EC"/>
</dbReference>
<dbReference type="GO" id="GO:0030170">
    <property type="term" value="F:pyridoxal phosphate binding"/>
    <property type="evidence" value="ECO:0007669"/>
    <property type="project" value="TreeGrafter"/>
</dbReference>
<dbReference type="GO" id="GO:0019464">
    <property type="term" value="P:glycine decarboxylation via glycine cleavage system"/>
    <property type="evidence" value="ECO:0007669"/>
    <property type="project" value="UniProtKB-UniRule"/>
</dbReference>
<dbReference type="CDD" id="cd00613">
    <property type="entry name" value="GDC-P"/>
    <property type="match status" value="2"/>
</dbReference>
<dbReference type="FunFam" id="3.40.640.10:FF:000005">
    <property type="entry name" value="Glycine dehydrogenase (decarboxylating), mitochondrial"/>
    <property type="match status" value="1"/>
</dbReference>
<dbReference type="FunFam" id="3.90.1150.10:FF:000007">
    <property type="entry name" value="Glycine dehydrogenase (decarboxylating), mitochondrial"/>
    <property type="match status" value="1"/>
</dbReference>
<dbReference type="FunFam" id="3.40.640.10:FF:000007">
    <property type="entry name" value="glycine dehydrogenase (Decarboxylating), mitochondrial"/>
    <property type="match status" value="1"/>
</dbReference>
<dbReference type="Gene3D" id="3.90.1150.10">
    <property type="entry name" value="Aspartate Aminotransferase, domain 1"/>
    <property type="match status" value="2"/>
</dbReference>
<dbReference type="Gene3D" id="3.40.640.10">
    <property type="entry name" value="Type I PLP-dependent aspartate aminotransferase-like (Major domain)"/>
    <property type="match status" value="2"/>
</dbReference>
<dbReference type="HAMAP" id="MF_00711">
    <property type="entry name" value="GcvP"/>
    <property type="match status" value="1"/>
</dbReference>
<dbReference type="InterPro" id="IPR003437">
    <property type="entry name" value="GcvP"/>
</dbReference>
<dbReference type="InterPro" id="IPR049316">
    <property type="entry name" value="GDC-P_C"/>
</dbReference>
<dbReference type="InterPro" id="IPR049315">
    <property type="entry name" value="GDC-P_N"/>
</dbReference>
<dbReference type="InterPro" id="IPR020581">
    <property type="entry name" value="GDC_P"/>
</dbReference>
<dbReference type="InterPro" id="IPR015424">
    <property type="entry name" value="PyrdxlP-dep_Trfase"/>
</dbReference>
<dbReference type="InterPro" id="IPR015421">
    <property type="entry name" value="PyrdxlP-dep_Trfase_major"/>
</dbReference>
<dbReference type="InterPro" id="IPR015422">
    <property type="entry name" value="PyrdxlP-dep_Trfase_small"/>
</dbReference>
<dbReference type="NCBIfam" id="TIGR00461">
    <property type="entry name" value="gcvP"/>
    <property type="match status" value="1"/>
</dbReference>
<dbReference type="PANTHER" id="PTHR11773:SF13">
    <property type="entry name" value="GLYCINE DEHYDROGENASE (DECARBOXYLATING)"/>
    <property type="match status" value="1"/>
</dbReference>
<dbReference type="PANTHER" id="PTHR11773">
    <property type="entry name" value="GLYCINE DEHYDROGENASE, DECARBOXYLATING"/>
    <property type="match status" value="1"/>
</dbReference>
<dbReference type="Pfam" id="PF21478">
    <property type="entry name" value="GcvP2_C"/>
    <property type="match status" value="1"/>
</dbReference>
<dbReference type="Pfam" id="PF02347">
    <property type="entry name" value="GDC-P"/>
    <property type="match status" value="2"/>
</dbReference>
<dbReference type="SUPFAM" id="SSF53383">
    <property type="entry name" value="PLP-dependent transferases"/>
    <property type="match status" value="2"/>
</dbReference>
<protein>
    <recommendedName>
        <fullName evidence="1">Glycine dehydrogenase (decarboxylating)</fullName>
        <ecNumber evidence="1">1.4.4.2</ecNumber>
    </recommendedName>
    <alternativeName>
        <fullName evidence="1">Glycine cleavage system P-protein</fullName>
    </alternativeName>
    <alternativeName>
        <fullName evidence="1">Glycine decarboxylase</fullName>
    </alternativeName>
    <alternativeName>
        <fullName evidence="1">Glycine dehydrogenase (aminomethyl-transferring)</fullName>
    </alternativeName>
</protein>